<proteinExistence type="inferred from homology"/>
<sequence>MIKSELVDFVAAKNPYLHRRDAENAVDAVLDEITGALERGERVDIRSFGTFVVRHRPARSGRNPLNGNAVFIEEKWVPFFRAGKEIRDRLNTAEKSQGRGNL</sequence>
<geneLocation type="plasmid">
    <name>pTiA6NC</name>
</geneLocation>
<keyword id="KW-0233">DNA recombination</keyword>
<keyword id="KW-0238">DNA-binding</keyword>
<keyword id="KW-0614">Plasmid</keyword>
<keyword id="KW-0804">Transcription</keyword>
<keyword id="KW-0805">Transcription regulation</keyword>
<keyword id="KW-0810">Translation regulation</keyword>
<evidence type="ECO:0000250" key="1"/>
<evidence type="ECO:0000305" key="2"/>
<reference key="1">
    <citation type="submission" date="1997-12" db="EMBL/GenBank/DDBJ databases">
        <authorList>
            <person name="Styker J.L."/>
            <person name="Mantis N.J."/>
            <person name="Kalogeraki V.S."/>
            <person name="Winans S.C."/>
        </authorList>
    </citation>
    <scope>NUCLEOTIDE SEQUENCE [GENOMIC DNA]</scope>
    <source>
        <strain>A348</strain>
    </source>
</reference>
<protein>
    <recommendedName>
        <fullName>Integration host factor subunit beta</fullName>
        <shortName>IHF-beta</shortName>
    </recommendedName>
</protein>
<feature type="chain" id="PRO_0000105040" description="Integration host factor subunit beta">
    <location>
        <begin position="1"/>
        <end position="102"/>
    </location>
</feature>
<accession>P0A3I1</accession>
<accession>O52514</accession>
<dbReference type="EMBL" id="AF242881">
    <property type="protein sequence ID" value="AAC72021.1"/>
    <property type="molecule type" value="Genomic_DNA"/>
</dbReference>
<dbReference type="RefSeq" id="NP_059821.1">
    <property type="nucleotide sequence ID" value="NC_002377.1"/>
</dbReference>
<dbReference type="RefSeq" id="WP_010892509.1">
    <property type="nucleotide sequence ID" value="NZ_QSNU01000012.1"/>
</dbReference>
<dbReference type="SMR" id="P0A3I1"/>
<dbReference type="OrthoDB" id="9804203at2"/>
<dbReference type="GO" id="GO:0005694">
    <property type="term" value="C:chromosome"/>
    <property type="evidence" value="ECO:0007669"/>
    <property type="project" value="InterPro"/>
</dbReference>
<dbReference type="GO" id="GO:0005829">
    <property type="term" value="C:cytosol"/>
    <property type="evidence" value="ECO:0007669"/>
    <property type="project" value="TreeGrafter"/>
</dbReference>
<dbReference type="GO" id="GO:0003677">
    <property type="term" value="F:DNA binding"/>
    <property type="evidence" value="ECO:0007669"/>
    <property type="project" value="UniProtKB-UniRule"/>
</dbReference>
<dbReference type="GO" id="GO:0030527">
    <property type="term" value="F:structural constituent of chromatin"/>
    <property type="evidence" value="ECO:0007669"/>
    <property type="project" value="InterPro"/>
</dbReference>
<dbReference type="GO" id="GO:0006310">
    <property type="term" value="P:DNA recombination"/>
    <property type="evidence" value="ECO:0007669"/>
    <property type="project" value="UniProtKB-UniRule"/>
</dbReference>
<dbReference type="GO" id="GO:0006355">
    <property type="term" value="P:regulation of DNA-templated transcription"/>
    <property type="evidence" value="ECO:0007669"/>
    <property type="project" value="UniProtKB-UniRule"/>
</dbReference>
<dbReference type="GO" id="GO:0006417">
    <property type="term" value="P:regulation of translation"/>
    <property type="evidence" value="ECO:0007669"/>
    <property type="project" value="UniProtKB-UniRule"/>
</dbReference>
<dbReference type="CDD" id="cd13836">
    <property type="entry name" value="IHF_B"/>
    <property type="match status" value="1"/>
</dbReference>
<dbReference type="Gene3D" id="4.10.520.10">
    <property type="entry name" value="IHF-like DNA-binding proteins"/>
    <property type="match status" value="1"/>
</dbReference>
<dbReference type="HAMAP" id="MF_00381">
    <property type="entry name" value="IHF_beta"/>
    <property type="match status" value="1"/>
</dbReference>
<dbReference type="InterPro" id="IPR000119">
    <property type="entry name" value="Hist_DNA-bd"/>
</dbReference>
<dbReference type="InterPro" id="IPR020816">
    <property type="entry name" value="Histone-like_DNA-bd_CS"/>
</dbReference>
<dbReference type="InterPro" id="IPR010992">
    <property type="entry name" value="IHF-like_DNA-bd_dom_sf"/>
</dbReference>
<dbReference type="InterPro" id="IPR005685">
    <property type="entry name" value="IHF_beta"/>
</dbReference>
<dbReference type="NCBIfam" id="NF001222">
    <property type="entry name" value="PRK00199.1"/>
    <property type="match status" value="1"/>
</dbReference>
<dbReference type="PANTHER" id="PTHR33175">
    <property type="entry name" value="DNA-BINDING PROTEIN HU"/>
    <property type="match status" value="1"/>
</dbReference>
<dbReference type="PANTHER" id="PTHR33175:SF5">
    <property type="entry name" value="INTEGRATION HOST FACTOR SUBUNIT BETA"/>
    <property type="match status" value="1"/>
</dbReference>
<dbReference type="Pfam" id="PF00216">
    <property type="entry name" value="Bac_DNA_binding"/>
    <property type="match status" value="1"/>
</dbReference>
<dbReference type="PRINTS" id="PR01727">
    <property type="entry name" value="DNABINDINGHU"/>
</dbReference>
<dbReference type="SMART" id="SM00411">
    <property type="entry name" value="BHL"/>
    <property type="match status" value="1"/>
</dbReference>
<dbReference type="SUPFAM" id="SSF47729">
    <property type="entry name" value="IHF-like DNA-binding proteins"/>
    <property type="match status" value="1"/>
</dbReference>
<dbReference type="PROSITE" id="PS00045">
    <property type="entry name" value="HISTONE_LIKE"/>
    <property type="match status" value="1"/>
</dbReference>
<name>IHFB_RHIRD</name>
<organism>
    <name type="scientific">Rhizobium radiobacter</name>
    <name type="common">Agrobacterium tumefaciens</name>
    <name type="synonym">Agrobacterium radiobacter</name>
    <dbReference type="NCBI Taxonomy" id="358"/>
    <lineage>
        <taxon>Bacteria</taxon>
        <taxon>Pseudomonadati</taxon>
        <taxon>Pseudomonadota</taxon>
        <taxon>Alphaproteobacteria</taxon>
        <taxon>Hyphomicrobiales</taxon>
        <taxon>Rhizobiaceae</taxon>
        <taxon>Rhizobium/Agrobacterium group</taxon>
        <taxon>Agrobacterium</taxon>
        <taxon>Agrobacterium tumefaciens complex</taxon>
    </lineage>
</organism>
<gene>
    <name type="primary">ihfB</name>
    <name type="synonym">himD</name>
    <name type="synonym">virN</name>
</gene>
<comment type="function">
    <text evidence="1">This protein is one of the two subunits of integration host factor, a specific DNA-binding protein that functions in genetic recombination as well as in transcriptional and translational control.</text>
</comment>
<comment type="subunit">
    <text evidence="1">Heterodimer of an alpha and a beta chain.</text>
</comment>
<comment type="similarity">
    <text evidence="2">Belongs to the bacterial histone-like protein family.</text>
</comment>